<gene>
    <name type="ordered locus">Bcen2424_3164</name>
</gene>
<keyword id="KW-0997">Cell inner membrane</keyword>
<keyword id="KW-1003">Cell membrane</keyword>
<keyword id="KW-0472">Membrane</keyword>
<organism>
    <name type="scientific">Burkholderia cenocepacia (strain HI2424)</name>
    <dbReference type="NCBI Taxonomy" id="331272"/>
    <lineage>
        <taxon>Bacteria</taxon>
        <taxon>Pseudomonadati</taxon>
        <taxon>Pseudomonadota</taxon>
        <taxon>Betaproteobacteria</taxon>
        <taxon>Burkholderiales</taxon>
        <taxon>Burkholderiaceae</taxon>
        <taxon>Burkholderia</taxon>
        <taxon>Burkholderia cepacia complex</taxon>
    </lineage>
</organism>
<accession>A0KBN4</accession>
<reference key="1">
    <citation type="submission" date="2006-08" db="EMBL/GenBank/DDBJ databases">
        <title>Complete sequence of chromosome 1 of Burkholderia cenocepacia HI2424.</title>
        <authorList>
            <person name="Copeland A."/>
            <person name="Lucas S."/>
            <person name="Lapidus A."/>
            <person name="Barry K."/>
            <person name="Detter J.C."/>
            <person name="Glavina del Rio T."/>
            <person name="Hammon N."/>
            <person name="Israni S."/>
            <person name="Pitluck S."/>
            <person name="Chain P."/>
            <person name="Malfatti S."/>
            <person name="Shin M."/>
            <person name="Vergez L."/>
            <person name="Schmutz J."/>
            <person name="Larimer F."/>
            <person name="Land M."/>
            <person name="Hauser L."/>
            <person name="Kyrpides N."/>
            <person name="Kim E."/>
            <person name="LiPuma J.J."/>
            <person name="Gonzalez C.F."/>
            <person name="Konstantinidis K."/>
            <person name="Tiedje J.M."/>
            <person name="Richardson P."/>
        </authorList>
    </citation>
    <scope>NUCLEOTIDE SEQUENCE [LARGE SCALE GENOMIC DNA]</scope>
    <source>
        <strain>HI2424</strain>
    </source>
</reference>
<comment type="function">
    <text evidence="1">Could be involved in insertion of integral membrane proteins into the membrane.</text>
</comment>
<comment type="subcellular location">
    <subcellularLocation>
        <location evidence="1">Cell inner membrane</location>
        <topology evidence="1">Peripheral membrane protein</topology>
        <orientation evidence="1">Cytoplasmic side</orientation>
    </subcellularLocation>
</comment>
<comment type="similarity">
    <text evidence="1">Belongs to the UPF0161 family.</text>
</comment>
<dbReference type="EMBL" id="CP000458">
    <property type="protein sequence ID" value="ABK09911.1"/>
    <property type="molecule type" value="Genomic_DNA"/>
</dbReference>
<dbReference type="KEGG" id="bch:Bcen2424_3164"/>
<dbReference type="HOGENOM" id="CLU_144811_2_2_4"/>
<dbReference type="GO" id="GO:0005886">
    <property type="term" value="C:plasma membrane"/>
    <property type="evidence" value="ECO:0007669"/>
    <property type="project" value="UniProtKB-SubCell"/>
</dbReference>
<dbReference type="HAMAP" id="MF_00386">
    <property type="entry name" value="UPF0161_YidD"/>
    <property type="match status" value="1"/>
</dbReference>
<dbReference type="InterPro" id="IPR002696">
    <property type="entry name" value="Membr_insert_effic_factor_YidD"/>
</dbReference>
<dbReference type="NCBIfam" id="TIGR00278">
    <property type="entry name" value="membrane protein insertion efficiency factor YidD"/>
    <property type="match status" value="1"/>
</dbReference>
<dbReference type="PANTHER" id="PTHR33383">
    <property type="entry name" value="MEMBRANE PROTEIN INSERTION EFFICIENCY FACTOR-RELATED"/>
    <property type="match status" value="1"/>
</dbReference>
<dbReference type="PANTHER" id="PTHR33383:SF1">
    <property type="entry name" value="MEMBRANE PROTEIN INSERTION EFFICIENCY FACTOR-RELATED"/>
    <property type="match status" value="1"/>
</dbReference>
<dbReference type="Pfam" id="PF01809">
    <property type="entry name" value="YidD"/>
    <property type="match status" value="1"/>
</dbReference>
<dbReference type="SMART" id="SM01234">
    <property type="entry name" value="Haemolytic"/>
    <property type="match status" value="1"/>
</dbReference>
<sequence>MKTVLIALLRFYKVAVSPMLGNRCRFYPSCSDYAREAIQYHGAARGTYLAVRRVCRCHPFSAGGVDLVPPPNSDTRARGEADARSHRL</sequence>
<evidence type="ECO:0000255" key="1">
    <source>
        <dbReference type="HAMAP-Rule" id="MF_00386"/>
    </source>
</evidence>
<evidence type="ECO:0000256" key="2">
    <source>
        <dbReference type="SAM" id="MobiDB-lite"/>
    </source>
</evidence>
<protein>
    <recommendedName>
        <fullName evidence="1">Putative membrane protein insertion efficiency factor</fullName>
    </recommendedName>
</protein>
<proteinExistence type="inferred from homology"/>
<feature type="chain" id="PRO_1000013068" description="Putative membrane protein insertion efficiency factor">
    <location>
        <begin position="1"/>
        <end position="88"/>
    </location>
</feature>
<feature type="region of interest" description="Disordered" evidence="2">
    <location>
        <begin position="68"/>
        <end position="88"/>
    </location>
</feature>
<feature type="compositionally biased region" description="Basic and acidic residues" evidence="2">
    <location>
        <begin position="75"/>
        <end position="88"/>
    </location>
</feature>
<name>YIDD_BURCH</name>